<accession>P0A9H6</accession>
<accession>P13040</accession>
<sequence>MSDERYQQRQQRVKEKVDARVAQAQDERGIIIVFTGNGKGKTTAAFGTATRAVGHGKKVGVVQFIKGTWPNGERNLLEPHGVEFQVMATGFTWDTQNRESDTAACREVWQHAKRMLADSSLDMVLLDELTYMVAYDYLPLEEVVQALNERPHQQTVIITGRGCHRDILELADTVSELRPVKHAFDAGVKAQIGIDY</sequence>
<protein>
    <recommendedName>
        <fullName>Corrinoid adenosyltransferase</fullName>
        <ecNumber>2.5.1.17</ecNumber>
    </recommendedName>
    <alternativeName>
        <fullName>Cob(II)alamin adenosyltransferase</fullName>
    </alternativeName>
    <alternativeName>
        <fullName>Cob(II)yrinic acid a,c-diamide adenosyltransferase</fullName>
    </alternativeName>
    <alternativeName>
        <fullName>Cobinamide/cobalamin adenosyltransferase</fullName>
    </alternativeName>
</protein>
<organism>
    <name type="scientific">Escherichia coli O6:H1 (strain CFT073 / ATCC 700928 / UPEC)</name>
    <dbReference type="NCBI Taxonomy" id="199310"/>
    <lineage>
        <taxon>Bacteria</taxon>
        <taxon>Pseudomonadati</taxon>
        <taxon>Pseudomonadota</taxon>
        <taxon>Gammaproteobacteria</taxon>
        <taxon>Enterobacterales</taxon>
        <taxon>Enterobacteriaceae</taxon>
        <taxon>Escherichia</taxon>
    </lineage>
</organism>
<gene>
    <name type="primary">btuR</name>
    <name type="ordered locus">c1735</name>
</gene>
<evidence type="ECO:0000250" key="1"/>
<evidence type="ECO:0000305" key="2"/>
<reference key="1">
    <citation type="journal article" date="2002" name="Proc. Natl. Acad. Sci. U.S.A.">
        <title>Extensive mosaic structure revealed by the complete genome sequence of uropathogenic Escherichia coli.</title>
        <authorList>
            <person name="Welch R.A."/>
            <person name="Burland V."/>
            <person name="Plunkett G. III"/>
            <person name="Redford P."/>
            <person name="Roesch P."/>
            <person name="Rasko D."/>
            <person name="Buckles E.L."/>
            <person name="Liou S.-R."/>
            <person name="Boutin A."/>
            <person name="Hackett J."/>
            <person name="Stroud D."/>
            <person name="Mayhew G.F."/>
            <person name="Rose D.J."/>
            <person name="Zhou S."/>
            <person name="Schwartz D.C."/>
            <person name="Perna N.T."/>
            <person name="Mobley H.L.T."/>
            <person name="Donnenberg M.S."/>
            <person name="Blattner F.R."/>
        </authorList>
    </citation>
    <scope>NUCLEOTIDE SEQUENCE [LARGE SCALE GENOMIC DNA]</scope>
    <source>
        <strain>CFT073 / ATCC 700928 / UPEC</strain>
    </source>
</reference>
<proteinExistence type="inferred from homology"/>
<comment type="function">
    <text evidence="1">Required for both de novo synthesis of the corrin ring for the assimilation of exogenous corrinoids. Participates in the adenosylation of a variety of incomplete and complete corrinoids (By similarity).</text>
</comment>
<comment type="catalytic activity">
    <reaction>
        <text>2 cob(II)yrinate a,c diamide + reduced [electron-transfer flavoprotein] + 2 ATP = 2 adenosylcob(III)yrinate a,c-diamide + 2 triphosphate + oxidized [electron-transfer flavoprotein] + 3 H(+)</text>
        <dbReference type="Rhea" id="RHEA:11528"/>
        <dbReference type="Rhea" id="RHEA-COMP:10685"/>
        <dbReference type="Rhea" id="RHEA-COMP:10686"/>
        <dbReference type="ChEBI" id="CHEBI:15378"/>
        <dbReference type="ChEBI" id="CHEBI:18036"/>
        <dbReference type="ChEBI" id="CHEBI:30616"/>
        <dbReference type="ChEBI" id="CHEBI:57692"/>
        <dbReference type="ChEBI" id="CHEBI:58307"/>
        <dbReference type="ChEBI" id="CHEBI:58503"/>
        <dbReference type="ChEBI" id="CHEBI:58537"/>
        <dbReference type="EC" id="2.5.1.17"/>
    </reaction>
</comment>
<comment type="catalytic activity">
    <reaction>
        <text>2 cob(II)alamin + reduced [electron-transfer flavoprotein] + 2 ATP = 2 adenosylcob(III)alamin + 2 triphosphate + oxidized [electron-transfer flavoprotein] + 3 H(+)</text>
        <dbReference type="Rhea" id="RHEA:28671"/>
        <dbReference type="Rhea" id="RHEA-COMP:10685"/>
        <dbReference type="Rhea" id="RHEA-COMP:10686"/>
        <dbReference type="ChEBI" id="CHEBI:15378"/>
        <dbReference type="ChEBI" id="CHEBI:16304"/>
        <dbReference type="ChEBI" id="CHEBI:18036"/>
        <dbReference type="ChEBI" id="CHEBI:18408"/>
        <dbReference type="ChEBI" id="CHEBI:30616"/>
        <dbReference type="ChEBI" id="CHEBI:57692"/>
        <dbReference type="ChEBI" id="CHEBI:58307"/>
        <dbReference type="EC" id="2.5.1.17"/>
    </reaction>
</comment>
<comment type="pathway">
    <text>Cofactor biosynthesis; adenosylcobalamin biosynthesis; adenosylcobalamin from cob(II)yrinate a,c-diamide: step 2/7.</text>
</comment>
<comment type="subcellular location">
    <subcellularLocation>
        <location evidence="2">Cytoplasm</location>
    </subcellularLocation>
</comment>
<comment type="similarity">
    <text evidence="2">Belongs to the Cob(I)alamin adenosyltransferase family.</text>
</comment>
<name>BTUR_ECOL6</name>
<feature type="chain" id="PRO_0000065008" description="Corrinoid adenosyltransferase">
    <location>
        <begin position="1"/>
        <end position="196"/>
    </location>
</feature>
<feature type="binding site" evidence="1">
    <location>
        <begin position="36"/>
        <end position="42"/>
    </location>
    <ligand>
        <name>ATP</name>
        <dbReference type="ChEBI" id="CHEBI:30616"/>
    </ligand>
</feature>
<keyword id="KW-0067">ATP-binding</keyword>
<keyword id="KW-0169">Cobalamin biosynthesis</keyword>
<keyword id="KW-0963">Cytoplasm</keyword>
<keyword id="KW-0547">Nucleotide-binding</keyword>
<keyword id="KW-0627">Porphyrin biosynthesis</keyword>
<keyword id="KW-1185">Reference proteome</keyword>
<keyword id="KW-0808">Transferase</keyword>
<dbReference type="EC" id="2.5.1.17"/>
<dbReference type="EMBL" id="AE014075">
    <property type="protein sequence ID" value="AAN80201.1"/>
    <property type="molecule type" value="Genomic_DNA"/>
</dbReference>
<dbReference type="SMR" id="P0A9H6"/>
<dbReference type="STRING" id="199310.c1735"/>
<dbReference type="KEGG" id="ecc:c1735"/>
<dbReference type="eggNOG" id="COG2109">
    <property type="taxonomic scope" value="Bacteria"/>
</dbReference>
<dbReference type="HOGENOM" id="CLU_088595_0_0_6"/>
<dbReference type="BioCyc" id="ECOL199310:C1735-MONOMER"/>
<dbReference type="UniPathway" id="UPA00148">
    <property type="reaction ID" value="UER00233"/>
</dbReference>
<dbReference type="Proteomes" id="UP000001410">
    <property type="component" value="Chromosome"/>
</dbReference>
<dbReference type="GO" id="GO:0005737">
    <property type="term" value="C:cytoplasm"/>
    <property type="evidence" value="ECO:0007669"/>
    <property type="project" value="UniProtKB-SubCell"/>
</dbReference>
<dbReference type="GO" id="GO:0005524">
    <property type="term" value="F:ATP binding"/>
    <property type="evidence" value="ECO:0007669"/>
    <property type="project" value="UniProtKB-KW"/>
</dbReference>
<dbReference type="GO" id="GO:0008817">
    <property type="term" value="F:corrinoid adenosyltransferase activity"/>
    <property type="evidence" value="ECO:0007669"/>
    <property type="project" value="UniProtKB-EC"/>
</dbReference>
<dbReference type="GO" id="GO:0009236">
    <property type="term" value="P:cobalamin biosynthetic process"/>
    <property type="evidence" value="ECO:0007669"/>
    <property type="project" value="UniProtKB-UniPathway"/>
</dbReference>
<dbReference type="GO" id="GO:0006779">
    <property type="term" value="P:porphyrin-containing compound biosynthetic process"/>
    <property type="evidence" value="ECO:0007669"/>
    <property type="project" value="UniProtKB-KW"/>
</dbReference>
<dbReference type="CDD" id="cd00561">
    <property type="entry name" value="CobA_ACA"/>
    <property type="match status" value="1"/>
</dbReference>
<dbReference type="FunFam" id="3.40.50.300:FF:000937">
    <property type="entry name" value="Corrinoid adenosyltransferase"/>
    <property type="match status" value="1"/>
</dbReference>
<dbReference type="Gene3D" id="3.40.50.300">
    <property type="entry name" value="P-loop containing nucleotide triphosphate hydrolases"/>
    <property type="match status" value="1"/>
</dbReference>
<dbReference type="InterPro" id="IPR003724">
    <property type="entry name" value="CblAdoTrfase_CobA"/>
</dbReference>
<dbReference type="InterPro" id="IPR025826">
    <property type="entry name" value="Co_AT_N_dom"/>
</dbReference>
<dbReference type="InterPro" id="IPR027417">
    <property type="entry name" value="P-loop_NTPase"/>
</dbReference>
<dbReference type="NCBIfam" id="TIGR00708">
    <property type="entry name" value="cobA"/>
    <property type="match status" value="1"/>
</dbReference>
<dbReference type="NCBIfam" id="NF004637">
    <property type="entry name" value="PRK05986.1"/>
    <property type="match status" value="1"/>
</dbReference>
<dbReference type="PANTHER" id="PTHR46638">
    <property type="entry name" value="CORRINOID ADENOSYLTRANSFERASE"/>
    <property type="match status" value="1"/>
</dbReference>
<dbReference type="PANTHER" id="PTHR46638:SF1">
    <property type="entry name" value="CORRINOID ADENOSYLTRANSFERASE"/>
    <property type="match status" value="1"/>
</dbReference>
<dbReference type="Pfam" id="PF12557">
    <property type="entry name" value="Co_AT_N"/>
    <property type="match status" value="1"/>
</dbReference>
<dbReference type="Pfam" id="PF02572">
    <property type="entry name" value="CobA_CobO_BtuR"/>
    <property type="match status" value="1"/>
</dbReference>
<dbReference type="PIRSF" id="PIRSF015617">
    <property type="entry name" value="Adensltrnsf_CobA"/>
    <property type="match status" value="1"/>
</dbReference>
<dbReference type="SUPFAM" id="SSF52540">
    <property type="entry name" value="P-loop containing nucleoside triphosphate hydrolases"/>
    <property type="match status" value="1"/>
</dbReference>